<comment type="function">
    <text evidence="1">Inhibits papain and cysteine cathepsin endopeptidases, and also inhibits cathepsins B and H, which exhibit both exopeptidase and endopeptidase activities.</text>
</comment>
<comment type="similarity">
    <text evidence="3">Belongs to the protease inhibitor I85 family.</text>
</comment>
<proteinExistence type="evidence at protein level"/>
<organism>
    <name type="scientific">Macrolepiota procera</name>
    <name type="common">Parasol mushroom</name>
    <dbReference type="NCBI Taxonomy" id="56183"/>
    <lineage>
        <taxon>Eukaryota</taxon>
        <taxon>Fungi</taxon>
        <taxon>Dikarya</taxon>
        <taxon>Basidiomycota</taxon>
        <taxon>Agaricomycotina</taxon>
        <taxon>Agaricomycetes</taxon>
        <taxon>Agaricomycetidae</taxon>
        <taxon>Agaricales</taxon>
        <taxon>Agaricineae</taxon>
        <taxon>Agaricaceae</taxon>
        <taxon>Macrolepiota</taxon>
    </lineage>
</organism>
<sequence>MGFEDGFYTILHLAEGQHPNSKIPGGMYASSKDGKDVPVTAEPLGPQSKIRWWIARDPQAGDDMYTITEFRIDNSIPGQWSRSPVETEVPVYLYDRIKAEETGYTCAWRIQPADHGADGVYHIVGNVRIGSTDWADLREEYGEPQVYMKPVPVIPNVYIPRWFILGYEE</sequence>
<keyword id="KW-0002">3D-structure</keyword>
<keyword id="KW-0903">Direct protein sequencing</keyword>
<keyword id="KW-0646">Protease inhibitor</keyword>
<keyword id="KW-0789">Thiol protease inhibitor</keyword>
<dbReference type="EMBL" id="FJ495239">
    <property type="protein sequence ID" value="ACL99723.1"/>
    <property type="molecule type" value="mRNA"/>
</dbReference>
<dbReference type="EMBL" id="FJ495240">
    <property type="protein sequence ID" value="ACL99724.1"/>
    <property type="molecule type" value="Genomic_DNA"/>
</dbReference>
<dbReference type="PDB" id="3H6Q">
    <property type="method" value="X-ray"/>
    <property type="resolution" value="1.64 A"/>
    <property type="chains" value="A=1-169"/>
</dbReference>
<dbReference type="PDB" id="8AE5">
    <property type="method" value="X-ray"/>
    <property type="resolution" value="2.29 A"/>
    <property type="chains" value="C/D=1-169"/>
</dbReference>
<dbReference type="PDBsum" id="3H6Q"/>
<dbReference type="PDBsum" id="8AE5"/>
<dbReference type="SMR" id="B9V973"/>
<dbReference type="MEROPS" id="I85.001"/>
<dbReference type="GO" id="GO:0004869">
    <property type="term" value="F:cysteine-type endopeptidase inhibitor activity"/>
    <property type="evidence" value="ECO:0007669"/>
    <property type="project" value="UniProtKB-KW"/>
</dbReference>
<dbReference type="CDD" id="cd23716">
    <property type="entry name" value="beta-trefoil_Ricin_Macrocypin"/>
    <property type="match status" value="1"/>
</dbReference>
<dbReference type="Gene3D" id="2.80.10.50">
    <property type="match status" value="1"/>
</dbReference>
<evidence type="ECO:0000269" key="1">
    <source>
    </source>
</evidence>
<evidence type="ECO:0000269" key="2">
    <source>
    </source>
</evidence>
<evidence type="ECO:0000305" key="3"/>
<evidence type="ECO:0007829" key="4">
    <source>
        <dbReference type="PDB" id="3H6Q"/>
    </source>
</evidence>
<evidence type="ECO:0007829" key="5">
    <source>
        <dbReference type="PDB" id="8AE5"/>
    </source>
</evidence>
<name>MCP1A_MACPC</name>
<reference key="1">
    <citation type="journal article" date="2009" name="FEBS J.">
        <title>Macrocypins, a family of cysteine protease inhibitors from the basidiomycete Macrolepiota procera.</title>
        <authorList>
            <person name="Sabotic J."/>
            <person name="Popovic T."/>
            <person name="Puizdar V."/>
            <person name="Brzin J."/>
        </authorList>
    </citation>
    <scope>NUCLEOTIDE SEQUENCE [MRNA]</scope>
    <scope>NUCLEOTIDE SEQUENCE [GENOMIC DNA]</scope>
    <scope>PROTEIN SEQUENCE OF 2-46</scope>
    <scope>FUNCTION</scope>
    <source>
        <tissue>Fruiting body</tissue>
    </source>
</reference>
<reference key="2">
    <citation type="journal article" date="2010" name="J. Biol. Chem.">
        <title>Versatile loops in mycocypins inhibit three protease families.</title>
        <authorList>
            <person name="Renko M."/>
            <person name="Sabotic J."/>
            <person name="Mihelic M."/>
            <person name="Brzin J."/>
            <person name="Kos J."/>
            <person name="Turk D."/>
        </authorList>
    </citation>
    <scope>X-RAY CRYSTALLOGRAPHY (1.64 ANGSTROMS)</scope>
    <scope>MUTAGENESIS OF GLY-25</scope>
</reference>
<protein>
    <recommendedName>
        <fullName>Macrocypin-1a</fullName>
    </recommendedName>
</protein>
<accession>B9V973</accession>
<feature type="initiator methionine" description="Removed" evidence="1">
    <location>
        <position position="1"/>
    </location>
</feature>
<feature type="chain" id="PRO_0000397842" description="Macrocypin-1a">
    <location>
        <begin position="2"/>
        <end position="169"/>
    </location>
</feature>
<feature type="mutagenesis site" description="20-fold lower inhibition." evidence="2">
    <original>G</original>
    <variation>A</variation>
    <location>
        <position position="25"/>
    </location>
</feature>
<feature type="sequence conflict" description="In Ref. 1; AA sequence." evidence="3" ref="1">
    <original>F</original>
    <variation>L</variation>
    <location>
        <position position="3"/>
    </location>
</feature>
<feature type="sequence conflict" description="In Ref. 1; AA sequence." evidence="3" ref="1">
    <original>F</original>
    <variation>L</variation>
    <location>
        <position position="7"/>
    </location>
</feature>
<feature type="sequence conflict" description="In Ref. 1; AA sequence." evidence="3" ref="1">
    <original>L</original>
    <variation>R</variation>
    <location>
        <position position="11"/>
    </location>
</feature>
<feature type="sequence conflict" description="In Ref. 1; AA sequence." evidence="3" ref="1">
    <original>A</original>
    <variation>V</variation>
    <location>
        <position position="14"/>
    </location>
</feature>
<feature type="sequence conflict" description="In Ref. 1; AA sequence." evidence="3" ref="1">
    <original>H</original>
    <variation>P</variation>
    <location>
        <position position="18"/>
    </location>
</feature>
<feature type="sequence conflict" description="In Ref. 1; AA sequence." evidence="3" ref="1">
    <location>
        <begin position="21"/>
        <end position="22"/>
    </location>
</feature>
<feature type="sequence conflict" description="In Ref. 1; AA sequence." evidence="3" ref="1">
    <original>G</original>
    <variation>P</variation>
    <location>
        <position position="45"/>
    </location>
</feature>
<feature type="strand" evidence="4">
    <location>
        <begin position="6"/>
        <end position="13"/>
    </location>
</feature>
<feature type="strand" evidence="5">
    <location>
        <begin position="21"/>
        <end position="23"/>
    </location>
</feature>
<feature type="strand" evidence="4">
    <location>
        <begin position="28"/>
        <end position="30"/>
    </location>
</feature>
<feature type="strand" evidence="4">
    <location>
        <begin position="40"/>
        <end position="42"/>
    </location>
</feature>
<feature type="strand" evidence="4">
    <location>
        <begin position="52"/>
        <end position="56"/>
    </location>
</feature>
<feature type="helix" evidence="4">
    <location>
        <begin position="58"/>
        <end position="60"/>
    </location>
</feature>
<feature type="strand" evidence="4">
    <location>
        <begin position="65"/>
        <end position="69"/>
    </location>
</feature>
<feature type="strand" evidence="4">
    <location>
        <begin position="72"/>
        <end position="75"/>
    </location>
</feature>
<feature type="strand" evidence="4">
    <location>
        <begin position="79"/>
        <end position="82"/>
    </location>
</feature>
<feature type="strand" evidence="4">
    <location>
        <begin position="92"/>
        <end position="94"/>
    </location>
</feature>
<feature type="helix" evidence="4">
    <location>
        <begin position="96"/>
        <end position="102"/>
    </location>
</feature>
<feature type="strand" evidence="4">
    <location>
        <begin position="108"/>
        <end position="112"/>
    </location>
</feature>
<feature type="strand" evidence="5">
    <location>
        <begin position="114"/>
        <end position="116"/>
    </location>
</feature>
<feature type="strand" evidence="4">
    <location>
        <begin position="120"/>
        <end position="128"/>
    </location>
</feature>
<feature type="strand" evidence="4">
    <location>
        <begin position="131"/>
        <end position="140"/>
    </location>
</feature>
<feature type="strand" evidence="4">
    <location>
        <begin position="143"/>
        <end position="151"/>
    </location>
</feature>
<feature type="strand" evidence="4">
    <location>
        <begin position="161"/>
        <end position="167"/>
    </location>
</feature>